<dbReference type="EMBL" id="FQ311472">
    <property type="protein sequence ID" value="CBQ73411.1"/>
    <property type="molecule type" value="Genomic_DNA"/>
</dbReference>
<dbReference type="EnsemblFungi" id="CBQ73411">
    <property type="protein sequence ID" value="CBQ73411"/>
    <property type="gene ID" value="sr17138"/>
</dbReference>
<dbReference type="VEuPathDB" id="FungiDB:sr17138"/>
<dbReference type="HOGENOM" id="CLU_190162_0_0_1"/>
<dbReference type="Proteomes" id="UP000008867">
    <property type="component" value="Chromosome 7"/>
</dbReference>
<protein>
    <recommendedName>
        <fullName evidence="5">Late effector protein 1</fullName>
    </recommendedName>
</protein>
<keyword id="KW-0134">Cell wall</keyword>
<keyword id="KW-0325">Glycoprotein</keyword>
<keyword id="KW-0964">Secreted</keyword>
<keyword id="KW-0732">Signal</keyword>
<keyword id="KW-0843">Virulence</keyword>
<accession>E7A1Q4</accession>
<name>LEP1_SPORE</name>
<sequence length="72" mass="7402">MKCYLVVVVAALCTLVAQGSVGAPIPKPNPIEDIYASQLPDPGTTAQMAAGDSAYPLTLLASFDPNDTSALH</sequence>
<feature type="signal peptide" evidence="2">
    <location>
        <begin position="1"/>
        <end position="22"/>
    </location>
</feature>
<feature type="chain" id="PRO_5003217088" description="Late effector protein 1">
    <location>
        <begin position="23"/>
        <end position="72"/>
    </location>
</feature>
<feature type="glycosylation site" description="N-linked (GlcNAc...) asparagine" evidence="3">
    <location>
        <position position="66"/>
    </location>
</feature>
<reference key="1">
    <citation type="journal article" date="2010" name="Science">
        <title>Pathogenicity determinants in smut fungi revealed by genome comparison.</title>
        <authorList>
            <person name="Schirawski J."/>
            <person name="Mannhaupt G."/>
            <person name="Muench K."/>
            <person name="Brefort T."/>
            <person name="Schipper K."/>
            <person name="Doehlemann G."/>
            <person name="Di Stasio M."/>
            <person name="Roessel N."/>
            <person name="Mendoza-Mendoza A."/>
            <person name="Pester D."/>
            <person name="Mueller O."/>
            <person name="Winterberg B."/>
            <person name="Meyer E."/>
            <person name="Ghareeb H."/>
            <person name="Wollenberg T."/>
            <person name="Muensterkoetter M."/>
            <person name="Wong P."/>
            <person name="Walter M."/>
            <person name="Stukenbrock E."/>
            <person name="Gueldener U."/>
            <person name="Kahmann R."/>
        </authorList>
    </citation>
    <scope>NUCLEOTIDE SEQUENCE [LARGE SCALE GENOMIC DNA]</scope>
    <source>
        <strain>SRZ2</strain>
    </source>
</reference>
<reference key="2">
    <citation type="journal article" date="2021" name="New Phytol.">
        <title>A small Ustilago maydis effector acts as a novel adhesin for hyphal aggregation in plant tumors.</title>
        <authorList>
            <person name="Fukada F."/>
            <person name="Roessel N."/>
            <person name="Muench K."/>
            <person name="Glatter T."/>
            <person name="Kahmann R."/>
        </authorList>
    </citation>
    <scope>FUNCTION</scope>
</reference>
<comment type="function">
    <text evidence="1 4">Core effector contributing to spore formation and tumor formation at the host plant (PubMed:33843063). Modulates surface hydrophobicity promoting cell-cell or cell-surface contacts (PubMed:33843063). Lep1 and rep1 interact in aerial hyphae to form a strong hydrophobic layer (By similarity). Plays a crucial role in hyphal aggregation that might be a prerequisite for strong proliferation of diploid cells and for induction of the morphological changes associated with spore formation (By similarity).</text>
</comment>
<comment type="subunit">
    <text evidence="1">Interacts at the cell wall with secreted rep1 repellent peptides.</text>
</comment>
<comment type="subcellular location">
    <subcellularLocation>
        <location evidence="1">Secreted</location>
    </subcellularLocation>
    <subcellularLocation>
        <location evidence="1">Secreted</location>
        <location evidence="1">Cell wall</location>
    </subcellularLocation>
</comment>
<comment type="similarity">
    <text evidence="6">Belongs to the lep1 family.</text>
</comment>
<evidence type="ECO:0000250" key="1">
    <source>
        <dbReference type="UniProtKB" id="A0A0D1C5X6"/>
    </source>
</evidence>
<evidence type="ECO:0000255" key="2"/>
<evidence type="ECO:0000255" key="3">
    <source>
        <dbReference type="PROSITE-ProRule" id="PRU00498"/>
    </source>
</evidence>
<evidence type="ECO:0000269" key="4">
    <source>
    </source>
</evidence>
<evidence type="ECO:0000303" key="5">
    <source>
    </source>
</evidence>
<evidence type="ECO:0000305" key="6"/>
<proteinExistence type="inferred from homology"/>
<gene>
    <name evidence="5" type="primary">lep1</name>
    <name type="ORF">sr17138</name>
</gene>
<organism>
    <name type="scientific">Sporisorium reilianum (strain SRZ2)</name>
    <name type="common">Maize head smut fungus</name>
    <dbReference type="NCBI Taxonomy" id="999809"/>
    <lineage>
        <taxon>Eukaryota</taxon>
        <taxon>Fungi</taxon>
        <taxon>Dikarya</taxon>
        <taxon>Basidiomycota</taxon>
        <taxon>Ustilaginomycotina</taxon>
        <taxon>Ustilaginomycetes</taxon>
        <taxon>Ustilaginales</taxon>
        <taxon>Ustilaginaceae</taxon>
        <taxon>Sporisorium</taxon>
    </lineage>
</organism>